<gene>
    <name evidence="1" type="primary">fabZ</name>
    <name type="ordered locus">Clos_2536</name>
</gene>
<comment type="function">
    <text evidence="1">Involved in unsaturated fatty acids biosynthesis. Catalyzes the dehydration of short chain beta-hydroxyacyl-ACPs and long chain saturated and unsaturated beta-hydroxyacyl-ACPs.</text>
</comment>
<comment type="catalytic activity">
    <reaction evidence="1">
        <text>a (3R)-hydroxyacyl-[ACP] = a (2E)-enoyl-[ACP] + H2O</text>
        <dbReference type="Rhea" id="RHEA:13097"/>
        <dbReference type="Rhea" id="RHEA-COMP:9925"/>
        <dbReference type="Rhea" id="RHEA-COMP:9945"/>
        <dbReference type="ChEBI" id="CHEBI:15377"/>
        <dbReference type="ChEBI" id="CHEBI:78784"/>
        <dbReference type="ChEBI" id="CHEBI:78827"/>
        <dbReference type="EC" id="4.2.1.59"/>
    </reaction>
</comment>
<comment type="subcellular location">
    <subcellularLocation>
        <location evidence="1">Cytoplasm</location>
    </subcellularLocation>
</comment>
<comment type="similarity">
    <text evidence="1">Belongs to the thioester dehydratase family. FabZ subfamily.</text>
</comment>
<proteinExistence type="inferred from homology"/>
<sequence>MNLNSIEIQKIIPHRYPFLLVDKIIDMEVGKRAVGIKNVTINEPFFQGHFPDQPIMPGVLIVEAMAQVAAVICMGSEENEGKLGVFTGIDNCKFRKQVVPGDALHIEIEMTAFRRGIGKAEGKAYVDGQLACSASLTFALIDKA</sequence>
<organism>
    <name type="scientific">Alkaliphilus oremlandii (strain OhILAs)</name>
    <name type="common">Clostridium oremlandii (strain OhILAs)</name>
    <dbReference type="NCBI Taxonomy" id="350688"/>
    <lineage>
        <taxon>Bacteria</taxon>
        <taxon>Bacillati</taxon>
        <taxon>Bacillota</taxon>
        <taxon>Clostridia</taxon>
        <taxon>Peptostreptococcales</taxon>
        <taxon>Natronincolaceae</taxon>
        <taxon>Alkaliphilus</taxon>
    </lineage>
</organism>
<feature type="chain" id="PRO_0000340757" description="3-hydroxyacyl-[acyl-carrier-protein] dehydratase FabZ">
    <location>
        <begin position="1"/>
        <end position="144"/>
    </location>
</feature>
<feature type="active site" evidence="1">
    <location>
        <position position="49"/>
    </location>
</feature>
<protein>
    <recommendedName>
        <fullName evidence="1">3-hydroxyacyl-[acyl-carrier-protein] dehydratase FabZ</fullName>
        <ecNumber evidence="1">4.2.1.59</ecNumber>
    </recommendedName>
    <alternativeName>
        <fullName evidence="1">(3R)-hydroxymyristoyl-[acyl-carrier-protein] dehydratase</fullName>
        <shortName evidence="1">(3R)-hydroxymyristoyl-ACP dehydrase</shortName>
    </alternativeName>
    <alternativeName>
        <fullName evidence="1">Beta-hydroxyacyl-ACP dehydratase</fullName>
    </alternativeName>
</protein>
<evidence type="ECO:0000255" key="1">
    <source>
        <dbReference type="HAMAP-Rule" id="MF_00406"/>
    </source>
</evidence>
<name>FABZ_ALKOO</name>
<keyword id="KW-0963">Cytoplasm</keyword>
<keyword id="KW-0441">Lipid A biosynthesis</keyword>
<keyword id="KW-0444">Lipid biosynthesis</keyword>
<keyword id="KW-0443">Lipid metabolism</keyword>
<keyword id="KW-0456">Lyase</keyword>
<keyword id="KW-1185">Reference proteome</keyword>
<reference key="1">
    <citation type="submission" date="2007-10" db="EMBL/GenBank/DDBJ databases">
        <title>Complete genome of Alkaliphilus oremlandii OhILAs.</title>
        <authorList>
            <person name="Copeland A."/>
            <person name="Lucas S."/>
            <person name="Lapidus A."/>
            <person name="Barry K."/>
            <person name="Detter J.C."/>
            <person name="Glavina del Rio T."/>
            <person name="Hammon N."/>
            <person name="Israni S."/>
            <person name="Dalin E."/>
            <person name="Tice H."/>
            <person name="Pitluck S."/>
            <person name="Chain P."/>
            <person name="Malfatti S."/>
            <person name="Shin M."/>
            <person name="Vergez L."/>
            <person name="Schmutz J."/>
            <person name="Larimer F."/>
            <person name="Land M."/>
            <person name="Hauser L."/>
            <person name="Kyrpides N."/>
            <person name="Mikhailova N."/>
            <person name="Stolz J.F."/>
            <person name="Dawson A."/>
            <person name="Fisher E."/>
            <person name="Crable B."/>
            <person name="Perera E."/>
            <person name="Lisak J."/>
            <person name="Ranganathan M."/>
            <person name="Basu P."/>
            <person name="Richardson P."/>
        </authorList>
    </citation>
    <scope>NUCLEOTIDE SEQUENCE [LARGE SCALE GENOMIC DNA]</scope>
    <source>
        <strain>OhILAs</strain>
    </source>
</reference>
<accession>A8MJT5</accession>
<dbReference type="EC" id="4.2.1.59" evidence="1"/>
<dbReference type="EMBL" id="CP000853">
    <property type="protein sequence ID" value="ABW20067.1"/>
    <property type="molecule type" value="Genomic_DNA"/>
</dbReference>
<dbReference type="RefSeq" id="WP_012160374.1">
    <property type="nucleotide sequence ID" value="NC_009922.1"/>
</dbReference>
<dbReference type="SMR" id="A8MJT5"/>
<dbReference type="STRING" id="350688.Clos_2536"/>
<dbReference type="KEGG" id="aoe:Clos_2536"/>
<dbReference type="eggNOG" id="COG0764">
    <property type="taxonomic scope" value="Bacteria"/>
</dbReference>
<dbReference type="HOGENOM" id="CLU_078912_3_0_9"/>
<dbReference type="OrthoDB" id="9772788at2"/>
<dbReference type="Proteomes" id="UP000000269">
    <property type="component" value="Chromosome"/>
</dbReference>
<dbReference type="GO" id="GO:0005737">
    <property type="term" value="C:cytoplasm"/>
    <property type="evidence" value="ECO:0007669"/>
    <property type="project" value="UniProtKB-SubCell"/>
</dbReference>
<dbReference type="GO" id="GO:0016020">
    <property type="term" value="C:membrane"/>
    <property type="evidence" value="ECO:0007669"/>
    <property type="project" value="GOC"/>
</dbReference>
<dbReference type="GO" id="GO:0019171">
    <property type="term" value="F:(3R)-hydroxyacyl-[acyl-carrier-protein] dehydratase activity"/>
    <property type="evidence" value="ECO:0007669"/>
    <property type="project" value="UniProtKB-EC"/>
</dbReference>
<dbReference type="GO" id="GO:0006633">
    <property type="term" value="P:fatty acid biosynthetic process"/>
    <property type="evidence" value="ECO:0007669"/>
    <property type="project" value="UniProtKB-UniRule"/>
</dbReference>
<dbReference type="GO" id="GO:0009245">
    <property type="term" value="P:lipid A biosynthetic process"/>
    <property type="evidence" value="ECO:0007669"/>
    <property type="project" value="UniProtKB-UniRule"/>
</dbReference>
<dbReference type="CDD" id="cd01288">
    <property type="entry name" value="FabZ"/>
    <property type="match status" value="1"/>
</dbReference>
<dbReference type="FunFam" id="3.10.129.10:FF:000001">
    <property type="entry name" value="3-hydroxyacyl-[acyl-carrier-protein] dehydratase FabZ"/>
    <property type="match status" value="1"/>
</dbReference>
<dbReference type="Gene3D" id="3.10.129.10">
    <property type="entry name" value="Hotdog Thioesterase"/>
    <property type="match status" value="1"/>
</dbReference>
<dbReference type="HAMAP" id="MF_00406">
    <property type="entry name" value="FabZ"/>
    <property type="match status" value="1"/>
</dbReference>
<dbReference type="InterPro" id="IPR013114">
    <property type="entry name" value="FabA_FabZ"/>
</dbReference>
<dbReference type="InterPro" id="IPR010084">
    <property type="entry name" value="FabZ"/>
</dbReference>
<dbReference type="InterPro" id="IPR029069">
    <property type="entry name" value="HotDog_dom_sf"/>
</dbReference>
<dbReference type="NCBIfam" id="TIGR01750">
    <property type="entry name" value="fabZ"/>
    <property type="match status" value="1"/>
</dbReference>
<dbReference type="NCBIfam" id="NF000582">
    <property type="entry name" value="PRK00006.1"/>
    <property type="match status" value="1"/>
</dbReference>
<dbReference type="PANTHER" id="PTHR30272">
    <property type="entry name" value="3-HYDROXYACYL-[ACYL-CARRIER-PROTEIN] DEHYDRATASE"/>
    <property type="match status" value="1"/>
</dbReference>
<dbReference type="PANTHER" id="PTHR30272:SF1">
    <property type="entry name" value="3-HYDROXYACYL-[ACYL-CARRIER-PROTEIN] DEHYDRATASE"/>
    <property type="match status" value="1"/>
</dbReference>
<dbReference type="Pfam" id="PF07977">
    <property type="entry name" value="FabA"/>
    <property type="match status" value="1"/>
</dbReference>
<dbReference type="SUPFAM" id="SSF54637">
    <property type="entry name" value="Thioesterase/thiol ester dehydrase-isomerase"/>
    <property type="match status" value="1"/>
</dbReference>